<keyword id="KW-0648">Protein biosynthesis</keyword>
<keyword id="KW-1185">Reference proteome</keyword>
<keyword id="KW-0808">Transferase</keyword>
<evidence type="ECO:0000255" key="1">
    <source>
        <dbReference type="HAMAP-Rule" id="MF_00182"/>
    </source>
</evidence>
<proteinExistence type="inferred from homology"/>
<organism>
    <name type="scientific">Bifidobacterium adolescentis (strain ATCC 15703 / DSM 20083 / NCTC 11814 / E194a)</name>
    <dbReference type="NCBI Taxonomy" id="367928"/>
    <lineage>
        <taxon>Bacteria</taxon>
        <taxon>Bacillati</taxon>
        <taxon>Actinomycetota</taxon>
        <taxon>Actinomycetes</taxon>
        <taxon>Bifidobacteriales</taxon>
        <taxon>Bifidobacteriaceae</taxon>
        <taxon>Bifidobacterium</taxon>
    </lineage>
</organism>
<feature type="chain" id="PRO_1000020022" description="Methionyl-tRNA formyltransferase">
    <location>
        <begin position="1"/>
        <end position="320"/>
    </location>
</feature>
<feature type="binding site" evidence="1">
    <location>
        <begin position="111"/>
        <end position="114"/>
    </location>
    <ligand>
        <name>(6S)-5,6,7,8-tetrahydrofolate</name>
        <dbReference type="ChEBI" id="CHEBI:57453"/>
    </ligand>
</feature>
<sequence length="320" mass="33999">MLKVLFAGTPDVAVPSLKLLAQDTEHFEVVAVLTRPDAPTGRGRKLVANPVKQAALELGLPVIESDPSEETFVSELAATGAQAAAVVAYGKILKQDVLDALPMGWYNLHFSLLPQWRGAAPVQRSIWAGEKVTGATVFRIVRAMDAGPILAQSTVEIGAHETAGELLGRLAEDGSHLLAASLQALADDQIAPVEQPAGAYEVAQKITVEDAHIRFDVPVFAADRQIRACTPNPGAWCELHAHADAEPATLHVLRAQPADMSNPNAPASLEPGHIVAGKKNVWVGTSTEPLELLEVKAQGKKAMRAADWARGAHLDNAFCE</sequence>
<reference key="1">
    <citation type="submission" date="2006-12" db="EMBL/GenBank/DDBJ databases">
        <title>Bifidobacterium adolescentis complete genome sequence.</title>
        <authorList>
            <person name="Suzuki T."/>
            <person name="Tsuda Y."/>
            <person name="Kanou N."/>
            <person name="Inoue T."/>
            <person name="Kumazaki K."/>
            <person name="Nagano S."/>
            <person name="Hirai S."/>
            <person name="Tanaka K."/>
            <person name="Watanabe K."/>
        </authorList>
    </citation>
    <scope>NUCLEOTIDE SEQUENCE [LARGE SCALE GENOMIC DNA]</scope>
    <source>
        <strain>ATCC 15703 / DSM 20083 / NCTC 11814 / E194a</strain>
    </source>
</reference>
<protein>
    <recommendedName>
        <fullName evidence="1">Methionyl-tRNA formyltransferase</fullName>
        <ecNumber evidence="1">2.1.2.9</ecNumber>
    </recommendedName>
</protein>
<comment type="function">
    <text evidence="1">Attaches a formyl group to the free amino group of methionyl-tRNA(fMet). The formyl group appears to play a dual role in the initiator identity of N-formylmethionyl-tRNA by promoting its recognition by IF2 and preventing the misappropriation of this tRNA by the elongation apparatus.</text>
</comment>
<comment type="catalytic activity">
    <reaction evidence="1">
        <text>L-methionyl-tRNA(fMet) + (6R)-10-formyltetrahydrofolate = N-formyl-L-methionyl-tRNA(fMet) + (6S)-5,6,7,8-tetrahydrofolate + H(+)</text>
        <dbReference type="Rhea" id="RHEA:24380"/>
        <dbReference type="Rhea" id="RHEA-COMP:9952"/>
        <dbReference type="Rhea" id="RHEA-COMP:9953"/>
        <dbReference type="ChEBI" id="CHEBI:15378"/>
        <dbReference type="ChEBI" id="CHEBI:57453"/>
        <dbReference type="ChEBI" id="CHEBI:78530"/>
        <dbReference type="ChEBI" id="CHEBI:78844"/>
        <dbReference type="ChEBI" id="CHEBI:195366"/>
        <dbReference type="EC" id="2.1.2.9"/>
    </reaction>
</comment>
<comment type="similarity">
    <text evidence="1">Belongs to the Fmt family.</text>
</comment>
<name>FMT_BIFAA</name>
<accession>A1A0U2</accession>
<dbReference type="EC" id="2.1.2.9" evidence="1"/>
<dbReference type="EMBL" id="AP009256">
    <property type="protein sequence ID" value="BAF39325.1"/>
    <property type="molecule type" value="Genomic_DNA"/>
</dbReference>
<dbReference type="RefSeq" id="WP_011742986.1">
    <property type="nucleotide sequence ID" value="NZ_CAXVKE010000001.1"/>
</dbReference>
<dbReference type="SMR" id="A1A0U2"/>
<dbReference type="STRING" id="367928.BAD_0544"/>
<dbReference type="PaxDb" id="1680-BADO_0557"/>
<dbReference type="GeneID" id="4556971"/>
<dbReference type="KEGG" id="bad:BAD_0544"/>
<dbReference type="HOGENOM" id="CLU_033347_1_0_11"/>
<dbReference type="Proteomes" id="UP000008702">
    <property type="component" value="Chromosome"/>
</dbReference>
<dbReference type="GO" id="GO:0005829">
    <property type="term" value="C:cytosol"/>
    <property type="evidence" value="ECO:0007669"/>
    <property type="project" value="TreeGrafter"/>
</dbReference>
<dbReference type="GO" id="GO:0004479">
    <property type="term" value="F:methionyl-tRNA formyltransferase activity"/>
    <property type="evidence" value="ECO:0007669"/>
    <property type="project" value="UniProtKB-UniRule"/>
</dbReference>
<dbReference type="CDD" id="cd08646">
    <property type="entry name" value="FMT_core_Met-tRNA-FMT_N"/>
    <property type="match status" value="1"/>
</dbReference>
<dbReference type="CDD" id="cd08704">
    <property type="entry name" value="Met_tRNA_FMT_C"/>
    <property type="match status" value="1"/>
</dbReference>
<dbReference type="Gene3D" id="3.40.50.12230">
    <property type="match status" value="1"/>
</dbReference>
<dbReference type="HAMAP" id="MF_00182">
    <property type="entry name" value="Formyl_trans"/>
    <property type="match status" value="1"/>
</dbReference>
<dbReference type="InterPro" id="IPR005794">
    <property type="entry name" value="Fmt"/>
</dbReference>
<dbReference type="InterPro" id="IPR005793">
    <property type="entry name" value="Formyl_trans_C"/>
</dbReference>
<dbReference type="InterPro" id="IPR002376">
    <property type="entry name" value="Formyl_transf_N"/>
</dbReference>
<dbReference type="InterPro" id="IPR036477">
    <property type="entry name" value="Formyl_transf_N_sf"/>
</dbReference>
<dbReference type="InterPro" id="IPR011034">
    <property type="entry name" value="Formyl_transferase-like_C_sf"/>
</dbReference>
<dbReference type="InterPro" id="IPR044135">
    <property type="entry name" value="Met-tRNA-FMT_C"/>
</dbReference>
<dbReference type="InterPro" id="IPR041711">
    <property type="entry name" value="Met-tRNA-FMT_N"/>
</dbReference>
<dbReference type="NCBIfam" id="TIGR00460">
    <property type="entry name" value="fmt"/>
    <property type="match status" value="1"/>
</dbReference>
<dbReference type="PANTHER" id="PTHR11138">
    <property type="entry name" value="METHIONYL-TRNA FORMYLTRANSFERASE"/>
    <property type="match status" value="1"/>
</dbReference>
<dbReference type="PANTHER" id="PTHR11138:SF5">
    <property type="entry name" value="METHIONYL-TRNA FORMYLTRANSFERASE, MITOCHONDRIAL"/>
    <property type="match status" value="1"/>
</dbReference>
<dbReference type="Pfam" id="PF02911">
    <property type="entry name" value="Formyl_trans_C"/>
    <property type="match status" value="1"/>
</dbReference>
<dbReference type="Pfam" id="PF00551">
    <property type="entry name" value="Formyl_trans_N"/>
    <property type="match status" value="1"/>
</dbReference>
<dbReference type="SUPFAM" id="SSF50486">
    <property type="entry name" value="FMT C-terminal domain-like"/>
    <property type="match status" value="1"/>
</dbReference>
<dbReference type="SUPFAM" id="SSF53328">
    <property type="entry name" value="Formyltransferase"/>
    <property type="match status" value="1"/>
</dbReference>
<gene>
    <name evidence="1" type="primary">fmt</name>
    <name type="ordered locus">BAD_0544</name>
</gene>